<protein>
    <recommendedName>
        <fullName evidence="1">Formate--tetrahydrofolate ligase</fullName>
        <ecNumber evidence="1">6.3.4.3</ecNumber>
    </recommendedName>
    <alternativeName>
        <fullName evidence="1">Formyltetrahydrofolate synthetase</fullName>
        <shortName evidence="1">FHS</shortName>
        <shortName evidence="1">FTHFS</shortName>
    </alternativeName>
</protein>
<sequence length="557" mass="59411">MSDIEIAQRAKMLPIIDLAREKLGIPAASLDPYGHYKAKVALDYIDGLKDRPDGKLILVTAISPTPAGEGKTTTTVGLGDALNRIGKKTVMCLREPSLGPCFGVKGGAAGGGHAQVVPMEDINLHFTGDFHAVGVAHNLLSALIDNHINHGNALDIDPRRIQWKRVVDMNDRALRKIVVGMGGTANGYLREDGFDIVVASEVMAILCLATSMADLKERLGRIIVGYKSDGKTPVYARDLKAHGAMAALLKDAIKPNLVQTLENNLAIIHGGPFANIAHGCNTVTATQTALKLADYVVTEAGFGADLGAEKFIDIKCRMAGLNPAAVVLVATVRALKFHGGVKKEDLNQENLAALEAGFANLERHVHNIREHYGLPCVVSINHFSFDTEAEIAWLMKKCEALGVKAVLARHWAEGGKGAEALARTVADIVDHQPGRHTFVYGDEATLWNKIETIATKIYGAAGISADAKVKAQLEAWNADYGHYPVCMAKTQMSFSTDPNAKGAPSGHTVAIREVRLANGAGFVVAIAGDMMTMPGLPKVPAAEHIDVDDDGRISGLF</sequence>
<feature type="chain" id="PRO_0000199360" description="Formate--tetrahydrofolate ligase">
    <location>
        <begin position="1"/>
        <end position="557"/>
    </location>
</feature>
<feature type="binding site" evidence="1">
    <location>
        <begin position="65"/>
        <end position="72"/>
    </location>
    <ligand>
        <name>ATP</name>
        <dbReference type="ChEBI" id="CHEBI:30616"/>
    </ligand>
</feature>
<dbReference type="EC" id="6.3.4.3" evidence="1"/>
<dbReference type="EMBL" id="AE017282">
    <property type="protein sequence ID" value="AAU91814.1"/>
    <property type="molecule type" value="Genomic_DNA"/>
</dbReference>
<dbReference type="RefSeq" id="WP_010961451.1">
    <property type="nucleotide sequence ID" value="NC_002977.6"/>
</dbReference>
<dbReference type="SMR" id="Q605Q9"/>
<dbReference type="STRING" id="243233.MCA2219"/>
<dbReference type="GeneID" id="88224431"/>
<dbReference type="KEGG" id="mca:MCA2219"/>
<dbReference type="eggNOG" id="COG2759">
    <property type="taxonomic scope" value="Bacteria"/>
</dbReference>
<dbReference type="HOGENOM" id="CLU_003601_3_3_6"/>
<dbReference type="UniPathway" id="UPA00193"/>
<dbReference type="Proteomes" id="UP000006821">
    <property type="component" value="Chromosome"/>
</dbReference>
<dbReference type="GO" id="GO:0005524">
    <property type="term" value="F:ATP binding"/>
    <property type="evidence" value="ECO:0007669"/>
    <property type="project" value="UniProtKB-UniRule"/>
</dbReference>
<dbReference type="GO" id="GO:0004329">
    <property type="term" value="F:formate-tetrahydrofolate ligase activity"/>
    <property type="evidence" value="ECO:0007669"/>
    <property type="project" value="UniProtKB-UniRule"/>
</dbReference>
<dbReference type="GO" id="GO:0035999">
    <property type="term" value="P:tetrahydrofolate interconversion"/>
    <property type="evidence" value="ECO:0007669"/>
    <property type="project" value="UniProtKB-UniRule"/>
</dbReference>
<dbReference type="CDD" id="cd00477">
    <property type="entry name" value="FTHFS"/>
    <property type="match status" value="1"/>
</dbReference>
<dbReference type="FunFam" id="3.30.1510.10:FF:000001">
    <property type="entry name" value="Formate--tetrahydrofolate ligase"/>
    <property type="match status" value="1"/>
</dbReference>
<dbReference type="Gene3D" id="3.30.1510.10">
    <property type="entry name" value="Domain 2, N(10)-formyltetrahydrofolate synthetase"/>
    <property type="match status" value="1"/>
</dbReference>
<dbReference type="Gene3D" id="3.10.410.10">
    <property type="entry name" value="Formyltetrahydrofolate synthetase, domain 3"/>
    <property type="match status" value="1"/>
</dbReference>
<dbReference type="Gene3D" id="3.40.50.300">
    <property type="entry name" value="P-loop containing nucleotide triphosphate hydrolases"/>
    <property type="match status" value="1"/>
</dbReference>
<dbReference type="HAMAP" id="MF_01543">
    <property type="entry name" value="FTHFS"/>
    <property type="match status" value="1"/>
</dbReference>
<dbReference type="InterPro" id="IPR000559">
    <property type="entry name" value="Formate_THF_ligase"/>
</dbReference>
<dbReference type="InterPro" id="IPR020628">
    <property type="entry name" value="Formate_THF_ligase_CS"/>
</dbReference>
<dbReference type="InterPro" id="IPR027417">
    <property type="entry name" value="P-loop_NTPase"/>
</dbReference>
<dbReference type="NCBIfam" id="NF010030">
    <property type="entry name" value="PRK13505.1"/>
    <property type="match status" value="1"/>
</dbReference>
<dbReference type="Pfam" id="PF01268">
    <property type="entry name" value="FTHFS"/>
    <property type="match status" value="1"/>
</dbReference>
<dbReference type="SUPFAM" id="SSF52540">
    <property type="entry name" value="P-loop containing nucleoside triphosphate hydrolases"/>
    <property type="match status" value="1"/>
</dbReference>
<dbReference type="PROSITE" id="PS00721">
    <property type="entry name" value="FTHFS_1"/>
    <property type="match status" value="1"/>
</dbReference>
<dbReference type="PROSITE" id="PS00722">
    <property type="entry name" value="FTHFS_2"/>
    <property type="match status" value="1"/>
</dbReference>
<proteinExistence type="inferred from homology"/>
<keyword id="KW-0067">ATP-binding</keyword>
<keyword id="KW-0436">Ligase</keyword>
<keyword id="KW-0547">Nucleotide-binding</keyword>
<keyword id="KW-0554">One-carbon metabolism</keyword>
<keyword id="KW-1185">Reference proteome</keyword>
<gene>
    <name evidence="1" type="primary">fhs</name>
    <name type="ordered locus">MCA2219</name>
</gene>
<accession>Q605Q9</accession>
<comment type="catalytic activity">
    <reaction evidence="1">
        <text>(6S)-5,6,7,8-tetrahydrofolate + formate + ATP = (6R)-10-formyltetrahydrofolate + ADP + phosphate</text>
        <dbReference type="Rhea" id="RHEA:20221"/>
        <dbReference type="ChEBI" id="CHEBI:15740"/>
        <dbReference type="ChEBI" id="CHEBI:30616"/>
        <dbReference type="ChEBI" id="CHEBI:43474"/>
        <dbReference type="ChEBI" id="CHEBI:57453"/>
        <dbReference type="ChEBI" id="CHEBI:195366"/>
        <dbReference type="ChEBI" id="CHEBI:456216"/>
        <dbReference type="EC" id="6.3.4.3"/>
    </reaction>
</comment>
<comment type="pathway">
    <text evidence="1">One-carbon metabolism; tetrahydrofolate interconversion.</text>
</comment>
<comment type="similarity">
    <text evidence="1">Belongs to the formate--tetrahydrofolate ligase family.</text>
</comment>
<organism>
    <name type="scientific">Methylococcus capsulatus (strain ATCC 33009 / NCIMB 11132 / Bath)</name>
    <dbReference type="NCBI Taxonomy" id="243233"/>
    <lineage>
        <taxon>Bacteria</taxon>
        <taxon>Pseudomonadati</taxon>
        <taxon>Pseudomonadota</taxon>
        <taxon>Gammaproteobacteria</taxon>
        <taxon>Methylococcales</taxon>
        <taxon>Methylococcaceae</taxon>
        <taxon>Methylococcus</taxon>
    </lineage>
</organism>
<reference key="1">
    <citation type="journal article" date="2004" name="PLoS Biol.">
        <title>Genomic insights into methanotrophy: the complete genome sequence of Methylococcus capsulatus (Bath).</title>
        <authorList>
            <person name="Ward N.L."/>
            <person name="Larsen O."/>
            <person name="Sakwa J."/>
            <person name="Bruseth L."/>
            <person name="Khouri H.M."/>
            <person name="Durkin A.S."/>
            <person name="Dimitrov G."/>
            <person name="Jiang L."/>
            <person name="Scanlan D."/>
            <person name="Kang K.H."/>
            <person name="Lewis M.R."/>
            <person name="Nelson K.E."/>
            <person name="Methe B.A."/>
            <person name="Wu M."/>
            <person name="Heidelberg J.F."/>
            <person name="Paulsen I.T."/>
            <person name="Fouts D.E."/>
            <person name="Ravel J."/>
            <person name="Tettelin H."/>
            <person name="Ren Q."/>
            <person name="Read T.D."/>
            <person name="DeBoy R.T."/>
            <person name="Seshadri R."/>
            <person name="Salzberg S.L."/>
            <person name="Jensen H.B."/>
            <person name="Birkeland N.K."/>
            <person name="Nelson W.C."/>
            <person name="Dodson R.J."/>
            <person name="Grindhaug S.H."/>
            <person name="Holt I.E."/>
            <person name="Eidhammer I."/>
            <person name="Jonasen I."/>
            <person name="Vanaken S."/>
            <person name="Utterback T.R."/>
            <person name="Feldblyum T.V."/>
            <person name="Fraser C.M."/>
            <person name="Lillehaug J.R."/>
            <person name="Eisen J.A."/>
        </authorList>
    </citation>
    <scope>NUCLEOTIDE SEQUENCE [LARGE SCALE GENOMIC DNA]</scope>
    <source>
        <strain>ATCC 33009 / NCIMB 11132 / Bath</strain>
    </source>
</reference>
<name>FTHS_METCA</name>
<evidence type="ECO:0000255" key="1">
    <source>
        <dbReference type="HAMAP-Rule" id="MF_01543"/>
    </source>
</evidence>